<name>CLPY_BACP2</name>
<proteinExistence type="inferred from homology"/>
<comment type="function">
    <text evidence="1">ATPase subunit of a proteasome-like degradation complex; this subunit has chaperone activity.</text>
</comment>
<comment type="subunit">
    <text evidence="1">A double ring-shaped homohexamer of ClpQ is capped on each side by a ring-shaped ClpY homohexamer. The assembly of the ClpQ/ClpY complex is dependent on binding of ATP (By similarity).</text>
</comment>
<comment type="subcellular location">
    <subcellularLocation>
        <location evidence="1">Cytoplasm</location>
    </subcellularLocation>
</comment>
<comment type="similarity">
    <text evidence="3">Belongs to the ClpX chaperone family. HslU subfamily.</text>
</comment>
<sequence length="466" mass="52415">MEKKPFTPREIVEKLDQYIIGQLDAKKAVAVALRNRYRRSLLHDKLKDEVVPKNILMIGPTGVGKTEIARRIAKISGAPFIKVEATKFTEVGYVGRDVESMVRDLVETAIRIVKEDKMKDVQEEAEKQANKRLVHLLVPGKKKSQSVKNPFEMLFGGSDEDDRDRDQSSEEVELESTRKRIAHQLAMGELEDHYVTIEVEEQQPSMFDMLQGSGMEQMGMNMQDALGNLMPKKKKRRKLTVREARKALTAEEASKLIDMDEVSQEAVYKAEQQGIIFIDEIDKIAKSGGASSADVSREGVQRDILPIVEGSTVMTKYGAVKTDHVLFVAAGAFHMAKPSDLIPELQGRFPIRVELDKLSIEDFVKILTEPDNALLKQYKALLETEGISLEFSDDAIHKIAEVAYHVNQETDNIGARRLHTILEKLLEELSFEAPDITLGTVTITPQYVEEKLGKIANNKDLSQFIL</sequence>
<evidence type="ECO:0000250" key="1"/>
<evidence type="ECO:0000256" key="2">
    <source>
        <dbReference type="SAM" id="MobiDB-lite"/>
    </source>
</evidence>
<evidence type="ECO:0000305" key="3"/>
<keyword id="KW-0067">ATP-binding</keyword>
<keyword id="KW-0143">Chaperone</keyword>
<keyword id="KW-0963">Cytoplasm</keyword>
<keyword id="KW-0547">Nucleotide-binding</keyword>
<dbReference type="EMBL" id="CP000813">
    <property type="protein sequence ID" value="ABV62197.1"/>
    <property type="molecule type" value="Genomic_DNA"/>
</dbReference>
<dbReference type="RefSeq" id="WP_012009950.1">
    <property type="nucleotide sequence ID" value="NZ_VEIS01000003.1"/>
</dbReference>
<dbReference type="SMR" id="A8FD80"/>
<dbReference type="STRING" id="315750.BPUM_1514"/>
<dbReference type="GeneID" id="5620777"/>
<dbReference type="KEGG" id="bpu:BPUM_1514"/>
<dbReference type="eggNOG" id="COG1220">
    <property type="taxonomic scope" value="Bacteria"/>
</dbReference>
<dbReference type="HOGENOM" id="CLU_033123_0_0_9"/>
<dbReference type="OrthoDB" id="9804062at2"/>
<dbReference type="Proteomes" id="UP000001355">
    <property type="component" value="Chromosome"/>
</dbReference>
<dbReference type="GO" id="GO:0009376">
    <property type="term" value="C:HslUV protease complex"/>
    <property type="evidence" value="ECO:0007669"/>
    <property type="project" value="UniProtKB-UniRule"/>
</dbReference>
<dbReference type="GO" id="GO:0005524">
    <property type="term" value="F:ATP binding"/>
    <property type="evidence" value="ECO:0007669"/>
    <property type="project" value="UniProtKB-UniRule"/>
</dbReference>
<dbReference type="GO" id="GO:0016887">
    <property type="term" value="F:ATP hydrolysis activity"/>
    <property type="evidence" value="ECO:0007669"/>
    <property type="project" value="InterPro"/>
</dbReference>
<dbReference type="GO" id="GO:0008233">
    <property type="term" value="F:peptidase activity"/>
    <property type="evidence" value="ECO:0007669"/>
    <property type="project" value="InterPro"/>
</dbReference>
<dbReference type="GO" id="GO:0036402">
    <property type="term" value="F:proteasome-activating activity"/>
    <property type="evidence" value="ECO:0007669"/>
    <property type="project" value="UniProtKB-UniRule"/>
</dbReference>
<dbReference type="GO" id="GO:0043335">
    <property type="term" value="P:protein unfolding"/>
    <property type="evidence" value="ECO:0007669"/>
    <property type="project" value="UniProtKB-UniRule"/>
</dbReference>
<dbReference type="GO" id="GO:0051603">
    <property type="term" value="P:proteolysis involved in protein catabolic process"/>
    <property type="evidence" value="ECO:0007669"/>
    <property type="project" value="TreeGrafter"/>
</dbReference>
<dbReference type="CDD" id="cd19498">
    <property type="entry name" value="RecA-like_HslU"/>
    <property type="match status" value="1"/>
</dbReference>
<dbReference type="FunFam" id="3.40.50.300:FF:000213">
    <property type="entry name" value="ATP-dependent protease ATPase subunit HslU"/>
    <property type="match status" value="1"/>
</dbReference>
<dbReference type="FunFam" id="3.40.50.300:FF:000220">
    <property type="entry name" value="ATP-dependent protease ATPase subunit HslU"/>
    <property type="match status" value="1"/>
</dbReference>
<dbReference type="Gene3D" id="1.10.8.60">
    <property type="match status" value="1"/>
</dbReference>
<dbReference type="Gene3D" id="3.40.50.300">
    <property type="entry name" value="P-loop containing nucleotide triphosphate hydrolases"/>
    <property type="match status" value="2"/>
</dbReference>
<dbReference type="HAMAP" id="MF_00249">
    <property type="entry name" value="HslU"/>
    <property type="match status" value="1"/>
</dbReference>
<dbReference type="InterPro" id="IPR003593">
    <property type="entry name" value="AAA+_ATPase"/>
</dbReference>
<dbReference type="InterPro" id="IPR050052">
    <property type="entry name" value="ATP-dep_Clp_protease_ClpX"/>
</dbReference>
<dbReference type="InterPro" id="IPR003959">
    <property type="entry name" value="ATPase_AAA_core"/>
</dbReference>
<dbReference type="InterPro" id="IPR019489">
    <property type="entry name" value="Clp_ATPase_C"/>
</dbReference>
<dbReference type="InterPro" id="IPR004491">
    <property type="entry name" value="HslU"/>
</dbReference>
<dbReference type="InterPro" id="IPR027417">
    <property type="entry name" value="P-loop_NTPase"/>
</dbReference>
<dbReference type="NCBIfam" id="TIGR00390">
    <property type="entry name" value="hslU"/>
    <property type="match status" value="1"/>
</dbReference>
<dbReference type="NCBIfam" id="NF003544">
    <property type="entry name" value="PRK05201.1"/>
    <property type="match status" value="1"/>
</dbReference>
<dbReference type="PANTHER" id="PTHR48102">
    <property type="entry name" value="ATP-DEPENDENT CLP PROTEASE ATP-BINDING SUBUNIT CLPX-LIKE, MITOCHONDRIAL-RELATED"/>
    <property type="match status" value="1"/>
</dbReference>
<dbReference type="PANTHER" id="PTHR48102:SF3">
    <property type="entry name" value="ATP-DEPENDENT PROTEASE ATPASE SUBUNIT HSLU"/>
    <property type="match status" value="1"/>
</dbReference>
<dbReference type="Pfam" id="PF00004">
    <property type="entry name" value="AAA"/>
    <property type="match status" value="1"/>
</dbReference>
<dbReference type="Pfam" id="PF07724">
    <property type="entry name" value="AAA_2"/>
    <property type="match status" value="1"/>
</dbReference>
<dbReference type="Pfam" id="PF10431">
    <property type="entry name" value="ClpB_D2-small"/>
    <property type="match status" value="1"/>
</dbReference>
<dbReference type="SMART" id="SM00382">
    <property type="entry name" value="AAA"/>
    <property type="match status" value="1"/>
</dbReference>
<dbReference type="SMART" id="SM01086">
    <property type="entry name" value="ClpB_D2-small"/>
    <property type="match status" value="1"/>
</dbReference>
<dbReference type="SUPFAM" id="SSF52540">
    <property type="entry name" value="P-loop containing nucleoside triphosphate hydrolases"/>
    <property type="match status" value="1"/>
</dbReference>
<accession>A8FD80</accession>
<feature type="chain" id="PRO_1000059021" description="ATP-dependent protease ATPase subunit ClpY">
    <location>
        <begin position="1"/>
        <end position="466"/>
    </location>
</feature>
<feature type="region of interest" description="Disordered" evidence="2">
    <location>
        <begin position="153"/>
        <end position="177"/>
    </location>
</feature>
<feature type="compositionally biased region" description="Acidic residues" evidence="2">
    <location>
        <begin position="158"/>
        <end position="174"/>
    </location>
</feature>
<feature type="binding site" evidence="1">
    <location>
        <position position="20"/>
    </location>
    <ligand>
        <name>ATP</name>
        <dbReference type="ChEBI" id="CHEBI:30616"/>
    </ligand>
</feature>
<feature type="binding site" evidence="1">
    <location>
        <begin position="62"/>
        <end position="67"/>
    </location>
    <ligand>
        <name>ATP</name>
        <dbReference type="ChEBI" id="CHEBI:30616"/>
    </ligand>
</feature>
<feature type="binding site" evidence="1">
    <location>
        <position position="279"/>
    </location>
    <ligand>
        <name>ATP</name>
        <dbReference type="ChEBI" id="CHEBI:30616"/>
    </ligand>
</feature>
<feature type="binding site" evidence="1">
    <location>
        <position position="344"/>
    </location>
    <ligand>
        <name>ATP</name>
        <dbReference type="ChEBI" id="CHEBI:30616"/>
    </ligand>
</feature>
<feature type="binding site" evidence="1">
    <location>
        <position position="416"/>
    </location>
    <ligand>
        <name>ATP</name>
        <dbReference type="ChEBI" id="CHEBI:30616"/>
    </ligand>
</feature>
<gene>
    <name type="primary">clpY</name>
    <name type="synonym">hslU</name>
    <name type="ordered locus">BPUM_1514</name>
</gene>
<organism>
    <name type="scientific">Bacillus pumilus (strain SAFR-032)</name>
    <dbReference type="NCBI Taxonomy" id="315750"/>
    <lineage>
        <taxon>Bacteria</taxon>
        <taxon>Bacillati</taxon>
        <taxon>Bacillota</taxon>
        <taxon>Bacilli</taxon>
        <taxon>Bacillales</taxon>
        <taxon>Bacillaceae</taxon>
        <taxon>Bacillus</taxon>
    </lineage>
</organism>
<protein>
    <recommendedName>
        <fullName>ATP-dependent protease ATPase subunit ClpY</fullName>
    </recommendedName>
</protein>
<reference key="1">
    <citation type="journal article" date="2007" name="PLoS ONE">
        <title>Paradoxical DNA repair and peroxide resistance gene conservation in Bacillus pumilus SAFR-032.</title>
        <authorList>
            <person name="Gioia J."/>
            <person name="Yerrapragada S."/>
            <person name="Qin X."/>
            <person name="Jiang H."/>
            <person name="Igboeli O.C."/>
            <person name="Muzny D."/>
            <person name="Dugan-Rocha S."/>
            <person name="Ding Y."/>
            <person name="Hawes A."/>
            <person name="Liu W."/>
            <person name="Perez L."/>
            <person name="Kovar C."/>
            <person name="Dinh H."/>
            <person name="Lee S."/>
            <person name="Nazareth L."/>
            <person name="Blyth P."/>
            <person name="Holder M."/>
            <person name="Buhay C."/>
            <person name="Tirumalai M.R."/>
            <person name="Liu Y."/>
            <person name="Dasgupta I."/>
            <person name="Bokhetache L."/>
            <person name="Fujita M."/>
            <person name="Karouia F."/>
            <person name="Eswara Moorthy P."/>
            <person name="Siefert J."/>
            <person name="Uzman A."/>
            <person name="Buzumbo P."/>
            <person name="Verma A."/>
            <person name="Zwiya H."/>
            <person name="McWilliams B.D."/>
            <person name="Olowu A."/>
            <person name="Clinkenbeard K.D."/>
            <person name="Newcombe D."/>
            <person name="Golebiewski L."/>
            <person name="Petrosino J.F."/>
            <person name="Nicholson W.L."/>
            <person name="Fox G.E."/>
            <person name="Venkateswaran K."/>
            <person name="Highlander S.K."/>
            <person name="Weinstock G.M."/>
        </authorList>
    </citation>
    <scope>NUCLEOTIDE SEQUENCE [LARGE SCALE GENOMIC DNA]</scope>
    <source>
        <strain>SAFR-032</strain>
    </source>
</reference>